<keyword id="KW-0963">Cytoplasm</keyword>
<keyword id="KW-0324">Glycolysis</keyword>
<keyword id="KW-0456">Lyase</keyword>
<keyword id="KW-0460">Magnesium</keyword>
<keyword id="KW-0479">Metal-binding</keyword>
<keyword id="KW-1185">Reference proteome</keyword>
<keyword id="KW-0964">Secreted</keyword>
<protein>
    <recommendedName>
        <fullName evidence="1">Enolase</fullName>
        <ecNumber evidence="1">4.2.1.11</ecNumber>
    </recommendedName>
    <alternativeName>
        <fullName evidence="1">2-phospho-D-glycerate hydro-lyase</fullName>
    </alternativeName>
    <alternativeName>
        <fullName evidence="1">2-phosphoglycerate dehydratase</fullName>
    </alternativeName>
</protein>
<organism>
    <name type="scientific">Polynucleobacter asymbioticus (strain DSM 18221 / CIP 109841 / QLW-P1DMWA-1)</name>
    <name type="common">Polynucleobacter necessarius subsp. asymbioticus</name>
    <dbReference type="NCBI Taxonomy" id="312153"/>
    <lineage>
        <taxon>Bacteria</taxon>
        <taxon>Pseudomonadati</taxon>
        <taxon>Pseudomonadota</taxon>
        <taxon>Betaproteobacteria</taxon>
        <taxon>Burkholderiales</taxon>
        <taxon>Burkholderiaceae</taxon>
        <taxon>Polynucleobacter</taxon>
    </lineage>
</organism>
<feature type="chain" id="PRO_1000079143" description="Enolase">
    <location>
        <begin position="1"/>
        <end position="428"/>
    </location>
</feature>
<feature type="active site" description="Proton donor" evidence="1">
    <location>
        <position position="205"/>
    </location>
</feature>
<feature type="active site" description="Proton acceptor" evidence="1">
    <location>
        <position position="337"/>
    </location>
</feature>
<feature type="binding site" evidence="1">
    <location>
        <position position="163"/>
    </location>
    <ligand>
        <name>(2R)-2-phosphoglycerate</name>
        <dbReference type="ChEBI" id="CHEBI:58289"/>
    </ligand>
</feature>
<feature type="binding site" evidence="1">
    <location>
        <position position="242"/>
    </location>
    <ligand>
        <name>Mg(2+)</name>
        <dbReference type="ChEBI" id="CHEBI:18420"/>
    </ligand>
</feature>
<feature type="binding site" evidence="1">
    <location>
        <position position="285"/>
    </location>
    <ligand>
        <name>Mg(2+)</name>
        <dbReference type="ChEBI" id="CHEBI:18420"/>
    </ligand>
</feature>
<feature type="binding site" evidence="1">
    <location>
        <position position="312"/>
    </location>
    <ligand>
        <name>Mg(2+)</name>
        <dbReference type="ChEBI" id="CHEBI:18420"/>
    </ligand>
</feature>
<feature type="binding site" evidence="1">
    <location>
        <position position="337"/>
    </location>
    <ligand>
        <name>(2R)-2-phosphoglycerate</name>
        <dbReference type="ChEBI" id="CHEBI:58289"/>
    </ligand>
</feature>
<feature type="binding site" evidence="1">
    <location>
        <position position="366"/>
    </location>
    <ligand>
        <name>(2R)-2-phosphoglycerate</name>
        <dbReference type="ChEBI" id="CHEBI:58289"/>
    </ligand>
</feature>
<feature type="binding site" evidence="1">
    <location>
        <position position="367"/>
    </location>
    <ligand>
        <name>(2R)-2-phosphoglycerate</name>
        <dbReference type="ChEBI" id="CHEBI:58289"/>
    </ligand>
</feature>
<feature type="binding site" evidence="1">
    <location>
        <position position="388"/>
    </location>
    <ligand>
        <name>(2R)-2-phosphoglycerate</name>
        <dbReference type="ChEBI" id="CHEBI:58289"/>
    </ligand>
</feature>
<accession>A4SXE9</accession>
<proteinExistence type="inferred from homology"/>
<evidence type="ECO:0000255" key="1">
    <source>
        <dbReference type="HAMAP-Rule" id="MF_00318"/>
    </source>
</evidence>
<sequence length="428" mass="45909">MSAIVDIIGREVLDSRGNPTVECDVLLESGVMGRAAVPSGASTGSREAIELRDGDKSRYLGKGVLKAVQNINVEIAETILGLDASEQAFLDHTLIELDGTHNKARLGANATLAVSMAVARAAAEEAGLPLYRYFGGSGGMQLPVPMMNIVNGGAHANNSLDIQEFMVMPVGAENFRDALRCGAEIFHELKKILAAQGMPTTVGDEGGFAPNFKSNHECLQIIMKAIEGAGYQAGEDVLLALDCAASEFYKDGKYHLSGEGLQLTSSEFSDYLGNLADQFPIVSIEDGMHESDWDGWADITQKLGKKIQLVGDDLFVTNTRILKEGIDKGIANSILIKINQIGTLTETFAAIEMAKRANYTAVISHRSGETEDSTIADIAVGTNAGQIKTGSLSRSDRIAKYNQLLRIEEDLGDVATYPGKSVFYNLKR</sequence>
<comment type="function">
    <text evidence="1">Catalyzes the reversible conversion of 2-phosphoglycerate (2-PG) into phosphoenolpyruvate (PEP). It is essential for the degradation of carbohydrates via glycolysis.</text>
</comment>
<comment type="catalytic activity">
    <reaction evidence="1">
        <text>(2R)-2-phosphoglycerate = phosphoenolpyruvate + H2O</text>
        <dbReference type="Rhea" id="RHEA:10164"/>
        <dbReference type="ChEBI" id="CHEBI:15377"/>
        <dbReference type="ChEBI" id="CHEBI:58289"/>
        <dbReference type="ChEBI" id="CHEBI:58702"/>
        <dbReference type="EC" id="4.2.1.11"/>
    </reaction>
</comment>
<comment type="cofactor">
    <cofactor evidence="1">
        <name>Mg(2+)</name>
        <dbReference type="ChEBI" id="CHEBI:18420"/>
    </cofactor>
    <text evidence="1">Binds a second Mg(2+) ion via substrate during catalysis.</text>
</comment>
<comment type="pathway">
    <text evidence="1">Carbohydrate degradation; glycolysis; pyruvate from D-glyceraldehyde 3-phosphate: step 4/5.</text>
</comment>
<comment type="subcellular location">
    <subcellularLocation>
        <location evidence="1">Cytoplasm</location>
    </subcellularLocation>
    <subcellularLocation>
        <location evidence="1">Secreted</location>
    </subcellularLocation>
    <subcellularLocation>
        <location evidence="1">Cell surface</location>
    </subcellularLocation>
    <text evidence="1">Fractions of enolase are present in both the cytoplasm and on the cell surface.</text>
</comment>
<comment type="similarity">
    <text evidence="1">Belongs to the enolase family.</text>
</comment>
<reference key="1">
    <citation type="journal article" date="2012" name="Stand. Genomic Sci.">
        <title>Complete genome sequence of Polynucleobacter necessarius subsp. asymbioticus type strain (QLW-P1DMWA-1(T)).</title>
        <authorList>
            <person name="Meincke L."/>
            <person name="Copeland A."/>
            <person name="Lapidus A."/>
            <person name="Lucas S."/>
            <person name="Berry K.W."/>
            <person name="Del Rio T.G."/>
            <person name="Hammon N."/>
            <person name="Dalin E."/>
            <person name="Tice H."/>
            <person name="Pitluck S."/>
            <person name="Richardson P."/>
            <person name="Bruce D."/>
            <person name="Goodwin L."/>
            <person name="Han C."/>
            <person name="Tapia R."/>
            <person name="Detter J.C."/>
            <person name="Schmutz J."/>
            <person name="Brettin T."/>
            <person name="Larimer F."/>
            <person name="Land M."/>
            <person name="Hauser L."/>
            <person name="Kyrpides N.C."/>
            <person name="Ivanova N."/>
            <person name="Goker M."/>
            <person name="Woyke T."/>
            <person name="Wu Q.L."/>
            <person name="Pockl M."/>
            <person name="Hahn M.W."/>
            <person name="Klenk H.P."/>
        </authorList>
    </citation>
    <scope>NUCLEOTIDE SEQUENCE [LARGE SCALE GENOMIC DNA]</scope>
    <source>
        <strain>DSM 18221 / CIP 109841 / QLW-P1DMWA-1</strain>
    </source>
</reference>
<gene>
    <name evidence="1" type="primary">eno</name>
    <name type="ordered locus">Pnuc_0947</name>
</gene>
<name>ENO_POLAQ</name>
<dbReference type="EC" id="4.2.1.11" evidence="1"/>
<dbReference type="EMBL" id="CP000655">
    <property type="protein sequence ID" value="ABP34163.1"/>
    <property type="molecule type" value="Genomic_DNA"/>
</dbReference>
<dbReference type="RefSeq" id="WP_011902788.1">
    <property type="nucleotide sequence ID" value="NC_009379.1"/>
</dbReference>
<dbReference type="SMR" id="A4SXE9"/>
<dbReference type="GeneID" id="31481315"/>
<dbReference type="KEGG" id="pnu:Pnuc_0947"/>
<dbReference type="eggNOG" id="COG0148">
    <property type="taxonomic scope" value="Bacteria"/>
</dbReference>
<dbReference type="HOGENOM" id="CLU_031223_2_1_4"/>
<dbReference type="UniPathway" id="UPA00109">
    <property type="reaction ID" value="UER00187"/>
</dbReference>
<dbReference type="Proteomes" id="UP000000231">
    <property type="component" value="Chromosome"/>
</dbReference>
<dbReference type="GO" id="GO:0009986">
    <property type="term" value="C:cell surface"/>
    <property type="evidence" value="ECO:0007669"/>
    <property type="project" value="UniProtKB-SubCell"/>
</dbReference>
<dbReference type="GO" id="GO:0005576">
    <property type="term" value="C:extracellular region"/>
    <property type="evidence" value="ECO:0007669"/>
    <property type="project" value="UniProtKB-SubCell"/>
</dbReference>
<dbReference type="GO" id="GO:0000015">
    <property type="term" value="C:phosphopyruvate hydratase complex"/>
    <property type="evidence" value="ECO:0007669"/>
    <property type="project" value="InterPro"/>
</dbReference>
<dbReference type="GO" id="GO:0000287">
    <property type="term" value="F:magnesium ion binding"/>
    <property type="evidence" value="ECO:0007669"/>
    <property type="project" value="UniProtKB-UniRule"/>
</dbReference>
<dbReference type="GO" id="GO:0004634">
    <property type="term" value="F:phosphopyruvate hydratase activity"/>
    <property type="evidence" value="ECO:0007669"/>
    <property type="project" value="UniProtKB-UniRule"/>
</dbReference>
<dbReference type="GO" id="GO:0006096">
    <property type="term" value="P:glycolytic process"/>
    <property type="evidence" value="ECO:0007669"/>
    <property type="project" value="UniProtKB-UniRule"/>
</dbReference>
<dbReference type="CDD" id="cd03313">
    <property type="entry name" value="enolase"/>
    <property type="match status" value="1"/>
</dbReference>
<dbReference type="FunFam" id="3.20.20.120:FF:000001">
    <property type="entry name" value="Enolase"/>
    <property type="match status" value="1"/>
</dbReference>
<dbReference type="FunFam" id="3.30.390.10:FF:000001">
    <property type="entry name" value="Enolase"/>
    <property type="match status" value="1"/>
</dbReference>
<dbReference type="Gene3D" id="3.20.20.120">
    <property type="entry name" value="Enolase-like C-terminal domain"/>
    <property type="match status" value="1"/>
</dbReference>
<dbReference type="Gene3D" id="3.30.390.10">
    <property type="entry name" value="Enolase-like, N-terminal domain"/>
    <property type="match status" value="1"/>
</dbReference>
<dbReference type="HAMAP" id="MF_00318">
    <property type="entry name" value="Enolase"/>
    <property type="match status" value="1"/>
</dbReference>
<dbReference type="InterPro" id="IPR000941">
    <property type="entry name" value="Enolase"/>
</dbReference>
<dbReference type="InterPro" id="IPR036849">
    <property type="entry name" value="Enolase-like_C_sf"/>
</dbReference>
<dbReference type="InterPro" id="IPR029017">
    <property type="entry name" value="Enolase-like_N"/>
</dbReference>
<dbReference type="InterPro" id="IPR020810">
    <property type="entry name" value="Enolase_C"/>
</dbReference>
<dbReference type="InterPro" id="IPR020809">
    <property type="entry name" value="Enolase_CS"/>
</dbReference>
<dbReference type="InterPro" id="IPR020811">
    <property type="entry name" value="Enolase_N"/>
</dbReference>
<dbReference type="NCBIfam" id="TIGR01060">
    <property type="entry name" value="eno"/>
    <property type="match status" value="1"/>
</dbReference>
<dbReference type="PANTHER" id="PTHR11902">
    <property type="entry name" value="ENOLASE"/>
    <property type="match status" value="1"/>
</dbReference>
<dbReference type="PANTHER" id="PTHR11902:SF1">
    <property type="entry name" value="ENOLASE"/>
    <property type="match status" value="1"/>
</dbReference>
<dbReference type="Pfam" id="PF00113">
    <property type="entry name" value="Enolase_C"/>
    <property type="match status" value="1"/>
</dbReference>
<dbReference type="Pfam" id="PF03952">
    <property type="entry name" value="Enolase_N"/>
    <property type="match status" value="1"/>
</dbReference>
<dbReference type="PIRSF" id="PIRSF001400">
    <property type="entry name" value="Enolase"/>
    <property type="match status" value="1"/>
</dbReference>
<dbReference type="PRINTS" id="PR00148">
    <property type="entry name" value="ENOLASE"/>
</dbReference>
<dbReference type="SFLD" id="SFLDS00001">
    <property type="entry name" value="Enolase"/>
    <property type="match status" value="1"/>
</dbReference>
<dbReference type="SFLD" id="SFLDF00002">
    <property type="entry name" value="enolase"/>
    <property type="match status" value="1"/>
</dbReference>
<dbReference type="SMART" id="SM01192">
    <property type="entry name" value="Enolase_C"/>
    <property type="match status" value="1"/>
</dbReference>
<dbReference type="SMART" id="SM01193">
    <property type="entry name" value="Enolase_N"/>
    <property type="match status" value="1"/>
</dbReference>
<dbReference type="SUPFAM" id="SSF51604">
    <property type="entry name" value="Enolase C-terminal domain-like"/>
    <property type="match status" value="1"/>
</dbReference>
<dbReference type="SUPFAM" id="SSF54826">
    <property type="entry name" value="Enolase N-terminal domain-like"/>
    <property type="match status" value="1"/>
</dbReference>
<dbReference type="PROSITE" id="PS00164">
    <property type="entry name" value="ENOLASE"/>
    <property type="match status" value="1"/>
</dbReference>